<name>DTD_DEIRA</name>
<sequence length="145" mass="15113">MRAVVQRVTRAKCTVDGAVTGETGPGLLVLLGVAPQDSADTARTLAAKLAKLRIFNDDAGKMNRSVQDIGGGVLSISQFTLFADTSRGNRPSFTGAASPKQGRELYAEFNAALRALGLPVGEGVFGAHMDIELVNDGPVTVTLDI</sequence>
<proteinExistence type="inferred from homology"/>
<accession>Q9RVY1</accession>
<reference key="1">
    <citation type="journal article" date="1999" name="Science">
        <title>Genome sequence of the radioresistant bacterium Deinococcus radiodurans R1.</title>
        <authorList>
            <person name="White O."/>
            <person name="Eisen J.A."/>
            <person name="Heidelberg J.F."/>
            <person name="Hickey E.K."/>
            <person name="Peterson J.D."/>
            <person name="Dodson R.J."/>
            <person name="Haft D.H."/>
            <person name="Gwinn M.L."/>
            <person name="Nelson W.C."/>
            <person name="Richardson D.L."/>
            <person name="Moffat K.S."/>
            <person name="Qin H."/>
            <person name="Jiang L."/>
            <person name="Pamphile W."/>
            <person name="Crosby M."/>
            <person name="Shen M."/>
            <person name="Vamathevan J.J."/>
            <person name="Lam P."/>
            <person name="McDonald L.A."/>
            <person name="Utterback T.R."/>
            <person name="Zalewski C."/>
            <person name="Makarova K.S."/>
            <person name="Aravind L."/>
            <person name="Daly M.J."/>
            <person name="Minton K.W."/>
            <person name="Fleischmann R.D."/>
            <person name="Ketchum K.A."/>
            <person name="Nelson K.E."/>
            <person name="Salzberg S.L."/>
            <person name="Smith H.O."/>
            <person name="Venter J.C."/>
            <person name="Fraser C.M."/>
        </authorList>
    </citation>
    <scope>NUCLEOTIDE SEQUENCE [LARGE SCALE GENOMIC DNA]</scope>
    <source>
        <strain>ATCC 13939 / DSM 20539 / JCM 16871 / CCUG 27074 / LMG 4051 / NBRC 15346 / NCIMB 9279 / VKM B-1422 / R1</strain>
    </source>
</reference>
<organism>
    <name type="scientific">Deinococcus radiodurans (strain ATCC 13939 / DSM 20539 / JCM 16871 / CCUG 27074 / LMG 4051 / NBRC 15346 / NCIMB 9279 / VKM B-1422 / R1)</name>
    <dbReference type="NCBI Taxonomy" id="243230"/>
    <lineage>
        <taxon>Bacteria</taxon>
        <taxon>Thermotogati</taxon>
        <taxon>Deinococcota</taxon>
        <taxon>Deinococci</taxon>
        <taxon>Deinococcales</taxon>
        <taxon>Deinococcaceae</taxon>
        <taxon>Deinococcus</taxon>
    </lineage>
</organism>
<comment type="function">
    <text evidence="1">An aminoacyl-tRNA editing enzyme that deacylates mischarged D-aminoacyl-tRNAs. Also deacylates mischarged glycyl-tRNA(Ala), protecting cells against glycine mischarging by AlaRS. Acts via tRNA-based rather than protein-based catalysis; rejects L-amino acids rather than detecting D-amino acids in the active site. By recycling D-aminoacyl-tRNA to D-amino acids and free tRNA molecules, this enzyme counteracts the toxicity associated with the formation of D-aminoacyl-tRNA entities in vivo and helps enforce protein L-homochirality.</text>
</comment>
<comment type="catalytic activity">
    <reaction evidence="1">
        <text>glycyl-tRNA(Ala) + H2O = tRNA(Ala) + glycine + H(+)</text>
        <dbReference type="Rhea" id="RHEA:53744"/>
        <dbReference type="Rhea" id="RHEA-COMP:9657"/>
        <dbReference type="Rhea" id="RHEA-COMP:13640"/>
        <dbReference type="ChEBI" id="CHEBI:15377"/>
        <dbReference type="ChEBI" id="CHEBI:15378"/>
        <dbReference type="ChEBI" id="CHEBI:57305"/>
        <dbReference type="ChEBI" id="CHEBI:78442"/>
        <dbReference type="ChEBI" id="CHEBI:78522"/>
        <dbReference type="EC" id="3.1.1.96"/>
    </reaction>
</comment>
<comment type="catalytic activity">
    <reaction evidence="1">
        <text>a D-aminoacyl-tRNA + H2O = a tRNA + a D-alpha-amino acid + H(+)</text>
        <dbReference type="Rhea" id="RHEA:13953"/>
        <dbReference type="Rhea" id="RHEA-COMP:10123"/>
        <dbReference type="Rhea" id="RHEA-COMP:10124"/>
        <dbReference type="ChEBI" id="CHEBI:15377"/>
        <dbReference type="ChEBI" id="CHEBI:15378"/>
        <dbReference type="ChEBI" id="CHEBI:59871"/>
        <dbReference type="ChEBI" id="CHEBI:78442"/>
        <dbReference type="ChEBI" id="CHEBI:79333"/>
        <dbReference type="EC" id="3.1.1.96"/>
    </reaction>
</comment>
<comment type="subunit">
    <text evidence="1">Homodimer.</text>
</comment>
<comment type="subcellular location">
    <subcellularLocation>
        <location evidence="1">Cytoplasm</location>
    </subcellularLocation>
</comment>
<comment type="domain">
    <text evidence="1">A Gly-cisPro motif from one monomer fits into the active site of the other monomer to allow specific chiral rejection of L-amino acids.</text>
</comment>
<comment type="similarity">
    <text evidence="1">Belongs to the DTD family.</text>
</comment>
<keyword id="KW-0963">Cytoplasm</keyword>
<keyword id="KW-0378">Hydrolase</keyword>
<keyword id="KW-1185">Reference proteome</keyword>
<keyword id="KW-0694">RNA-binding</keyword>
<keyword id="KW-0820">tRNA-binding</keyword>
<dbReference type="EC" id="3.1.1.96" evidence="1"/>
<dbReference type="EMBL" id="AE000513">
    <property type="protein sequence ID" value="AAF10459.1"/>
    <property type="molecule type" value="Genomic_DNA"/>
</dbReference>
<dbReference type="PIR" id="G75465">
    <property type="entry name" value="G75465"/>
</dbReference>
<dbReference type="RefSeq" id="NP_294614.1">
    <property type="nucleotide sequence ID" value="NC_001263.1"/>
</dbReference>
<dbReference type="RefSeq" id="WP_010887535.1">
    <property type="nucleotide sequence ID" value="NC_001263.1"/>
</dbReference>
<dbReference type="SMR" id="Q9RVY1"/>
<dbReference type="FunCoup" id="Q9RVY1">
    <property type="interactions" value="368"/>
</dbReference>
<dbReference type="STRING" id="243230.DR_0890"/>
<dbReference type="PaxDb" id="243230-DR_0890"/>
<dbReference type="EnsemblBacteria" id="AAF10459">
    <property type="protein sequence ID" value="AAF10459"/>
    <property type="gene ID" value="DR_0890"/>
</dbReference>
<dbReference type="GeneID" id="69517135"/>
<dbReference type="KEGG" id="dra:DR_0890"/>
<dbReference type="PATRIC" id="fig|243230.17.peg.1076"/>
<dbReference type="eggNOG" id="COG1490">
    <property type="taxonomic scope" value="Bacteria"/>
</dbReference>
<dbReference type="HOGENOM" id="CLU_076901_1_1_0"/>
<dbReference type="InParanoid" id="Q9RVY1"/>
<dbReference type="OrthoDB" id="9801395at2"/>
<dbReference type="Proteomes" id="UP000002524">
    <property type="component" value="Chromosome 1"/>
</dbReference>
<dbReference type="GO" id="GO:0005737">
    <property type="term" value="C:cytoplasm"/>
    <property type="evidence" value="ECO:0000318"/>
    <property type="project" value="GO_Central"/>
</dbReference>
<dbReference type="GO" id="GO:0051500">
    <property type="term" value="F:D-tyrosyl-tRNA(Tyr) deacylase activity"/>
    <property type="evidence" value="ECO:0000318"/>
    <property type="project" value="GO_Central"/>
</dbReference>
<dbReference type="GO" id="GO:0106026">
    <property type="term" value="F:Gly-tRNA(Ala) deacylase activity"/>
    <property type="evidence" value="ECO:0007669"/>
    <property type="project" value="UniProtKB-UniRule"/>
</dbReference>
<dbReference type="GO" id="GO:0043908">
    <property type="term" value="F:Ser(Gly)-tRNA(Ala) hydrolase activity"/>
    <property type="evidence" value="ECO:0007669"/>
    <property type="project" value="UniProtKB-UniRule"/>
</dbReference>
<dbReference type="GO" id="GO:0000049">
    <property type="term" value="F:tRNA binding"/>
    <property type="evidence" value="ECO:0007669"/>
    <property type="project" value="UniProtKB-UniRule"/>
</dbReference>
<dbReference type="GO" id="GO:0019478">
    <property type="term" value="P:D-amino acid catabolic process"/>
    <property type="evidence" value="ECO:0007669"/>
    <property type="project" value="UniProtKB-UniRule"/>
</dbReference>
<dbReference type="GO" id="GO:0006399">
    <property type="term" value="P:tRNA metabolic process"/>
    <property type="evidence" value="ECO:0000318"/>
    <property type="project" value="GO_Central"/>
</dbReference>
<dbReference type="CDD" id="cd00563">
    <property type="entry name" value="Dtyr_deacylase"/>
    <property type="match status" value="1"/>
</dbReference>
<dbReference type="FunFam" id="3.50.80.10:FF:000001">
    <property type="entry name" value="D-aminoacyl-tRNA deacylase"/>
    <property type="match status" value="1"/>
</dbReference>
<dbReference type="Gene3D" id="3.50.80.10">
    <property type="entry name" value="D-tyrosyl-tRNA(Tyr) deacylase"/>
    <property type="match status" value="1"/>
</dbReference>
<dbReference type="HAMAP" id="MF_00518">
    <property type="entry name" value="Deacylase_Dtd"/>
    <property type="match status" value="1"/>
</dbReference>
<dbReference type="InterPro" id="IPR003732">
    <property type="entry name" value="Daa-tRNA_deacyls_DTD"/>
</dbReference>
<dbReference type="InterPro" id="IPR023509">
    <property type="entry name" value="DTD-like_sf"/>
</dbReference>
<dbReference type="NCBIfam" id="TIGR00256">
    <property type="entry name" value="D-aminoacyl-tRNA deacylase"/>
    <property type="match status" value="1"/>
</dbReference>
<dbReference type="PANTHER" id="PTHR10472:SF5">
    <property type="entry name" value="D-AMINOACYL-TRNA DEACYLASE 1"/>
    <property type="match status" value="1"/>
</dbReference>
<dbReference type="PANTHER" id="PTHR10472">
    <property type="entry name" value="D-TYROSYL-TRNA TYR DEACYLASE"/>
    <property type="match status" value="1"/>
</dbReference>
<dbReference type="Pfam" id="PF02580">
    <property type="entry name" value="Tyr_Deacylase"/>
    <property type="match status" value="1"/>
</dbReference>
<dbReference type="SUPFAM" id="SSF69500">
    <property type="entry name" value="DTD-like"/>
    <property type="match status" value="1"/>
</dbReference>
<feature type="chain" id="PRO_0000164535" description="D-aminoacyl-tRNA deacylase">
    <location>
        <begin position="1"/>
        <end position="145"/>
    </location>
</feature>
<feature type="short sequence motif" description="Gly-cisPro motif, important for rejection of L-amino acids" evidence="1">
    <location>
        <begin position="137"/>
        <end position="138"/>
    </location>
</feature>
<evidence type="ECO:0000255" key="1">
    <source>
        <dbReference type="HAMAP-Rule" id="MF_00518"/>
    </source>
</evidence>
<gene>
    <name evidence="1" type="primary">dtd</name>
    <name type="ordered locus">DR_0890</name>
</gene>
<protein>
    <recommendedName>
        <fullName evidence="1">D-aminoacyl-tRNA deacylase</fullName>
        <shortName evidence="1">DTD</shortName>
        <ecNumber evidence="1">3.1.1.96</ecNumber>
    </recommendedName>
    <alternativeName>
        <fullName evidence="1">Gly-tRNA(Ala) deacylase</fullName>
    </alternativeName>
</protein>